<name>SARX_STAAW</name>
<sequence>MNTEKLETLLGFYKQYKALSEYIDKKYKLSLNDLAVLDLTMKHCKDEKVLMQSFLKTAMDELDLSRTKLLVSIRRLIEKERLSKVRSSKDERKIYIYLNNDDISKFNALFEDVEQFLNI</sequence>
<accession>Q7A1K6</accession>
<keyword id="KW-0963">Cytoplasm</keyword>
<keyword id="KW-0238">DNA-binding</keyword>
<keyword id="KW-0678">Repressor</keyword>
<keyword id="KW-0804">Transcription</keyword>
<keyword id="KW-0805">Transcription regulation</keyword>
<keyword id="KW-0843">Virulence</keyword>
<proteinExistence type="inferred from homology"/>
<protein>
    <recommendedName>
        <fullName>HTH-type transcriptional regulator SarX</fullName>
    </recommendedName>
    <alternativeName>
        <fullName>Staphylococcal accessory regulator X</fullName>
    </alternativeName>
</protein>
<gene>
    <name type="primary">sarX</name>
    <name type="ordered locus">MW0630</name>
</gene>
<dbReference type="EMBL" id="BA000033">
    <property type="protein sequence ID" value="BAB94495.1"/>
    <property type="status" value="ALT_INIT"/>
    <property type="molecule type" value="Genomic_DNA"/>
</dbReference>
<dbReference type="RefSeq" id="WP_001090985.1">
    <property type="nucleotide sequence ID" value="NC_003923.1"/>
</dbReference>
<dbReference type="SMR" id="Q7A1K6"/>
<dbReference type="KEGG" id="sam:MW0630"/>
<dbReference type="HOGENOM" id="CLU_166896_0_0_9"/>
<dbReference type="GO" id="GO:0005737">
    <property type="term" value="C:cytoplasm"/>
    <property type="evidence" value="ECO:0007669"/>
    <property type="project" value="UniProtKB-SubCell"/>
</dbReference>
<dbReference type="GO" id="GO:0003677">
    <property type="term" value="F:DNA binding"/>
    <property type="evidence" value="ECO:0007669"/>
    <property type="project" value="UniProtKB-KW"/>
</dbReference>
<dbReference type="GO" id="GO:0006355">
    <property type="term" value="P:regulation of DNA-templated transcription"/>
    <property type="evidence" value="ECO:0007669"/>
    <property type="project" value="InterPro"/>
</dbReference>
<dbReference type="Gene3D" id="1.10.10.10">
    <property type="entry name" value="Winged helix-like DNA-binding domain superfamily/Winged helix DNA-binding domain"/>
    <property type="match status" value="1"/>
</dbReference>
<dbReference type="InterPro" id="IPR010166">
    <property type="entry name" value="SarA/Rot_dom"/>
</dbReference>
<dbReference type="InterPro" id="IPR055166">
    <property type="entry name" value="Transc_reg_Sar_Rot_HTH"/>
</dbReference>
<dbReference type="InterPro" id="IPR036388">
    <property type="entry name" value="WH-like_DNA-bd_sf"/>
</dbReference>
<dbReference type="InterPro" id="IPR036390">
    <property type="entry name" value="WH_DNA-bd_sf"/>
</dbReference>
<dbReference type="NCBIfam" id="TIGR01889">
    <property type="entry name" value="Staph_reg_Sar"/>
    <property type="match status" value="1"/>
</dbReference>
<dbReference type="Pfam" id="PF22381">
    <property type="entry name" value="Staph_reg_Sar_Rot"/>
    <property type="match status" value="1"/>
</dbReference>
<dbReference type="SUPFAM" id="SSF46785">
    <property type="entry name" value="Winged helix' DNA-binding domain"/>
    <property type="match status" value="1"/>
</dbReference>
<comment type="function">
    <text evidence="1">Involved in the regulation of virulence genes. Acts as a repressor of the agr locus and consequently targets genes regulated by the agr system such as sspA, hla and hlb. Binds directly to the agr promoter region (By similarity).</text>
</comment>
<comment type="subcellular location">
    <subcellularLocation>
        <location evidence="1">Cytoplasm</location>
    </subcellularLocation>
</comment>
<comment type="similarity">
    <text evidence="3">Belongs to the SarA family.</text>
</comment>
<comment type="sequence caution" evidence="3">
    <conflict type="erroneous initiation">
        <sequence resource="EMBL-CDS" id="BAB94495"/>
    </conflict>
</comment>
<reference key="1">
    <citation type="journal article" date="2002" name="Lancet">
        <title>Genome and virulence determinants of high virulence community-acquired MRSA.</title>
        <authorList>
            <person name="Baba T."/>
            <person name="Takeuchi F."/>
            <person name="Kuroda M."/>
            <person name="Yuzawa H."/>
            <person name="Aoki K."/>
            <person name="Oguchi A."/>
            <person name="Nagai Y."/>
            <person name="Iwama N."/>
            <person name="Asano K."/>
            <person name="Naimi T."/>
            <person name="Kuroda H."/>
            <person name="Cui L."/>
            <person name="Yamamoto K."/>
            <person name="Hiramatsu K."/>
        </authorList>
    </citation>
    <scope>NUCLEOTIDE SEQUENCE [LARGE SCALE GENOMIC DNA]</scope>
    <source>
        <strain>MW2</strain>
    </source>
</reference>
<organism>
    <name type="scientific">Staphylococcus aureus (strain MW2)</name>
    <dbReference type="NCBI Taxonomy" id="196620"/>
    <lineage>
        <taxon>Bacteria</taxon>
        <taxon>Bacillati</taxon>
        <taxon>Bacillota</taxon>
        <taxon>Bacilli</taxon>
        <taxon>Bacillales</taxon>
        <taxon>Staphylococcaceae</taxon>
        <taxon>Staphylococcus</taxon>
    </lineage>
</organism>
<feature type="chain" id="PRO_0000259144" description="HTH-type transcriptional regulator SarX">
    <location>
        <begin position="1"/>
        <end position="119"/>
    </location>
</feature>
<feature type="DNA-binding region" description="H-T-H motif" evidence="2">
    <location>
        <begin position="55"/>
        <end position="78"/>
    </location>
</feature>
<evidence type="ECO:0000250" key="1"/>
<evidence type="ECO:0000255" key="2"/>
<evidence type="ECO:0000305" key="3"/>